<feature type="chain" id="PRO_0000424512" description="Heterogeneous nuclear ribonucleoprotein A1">
    <location>
        <begin position="1"/>
        <end position="320"/>
    </location>
</feature>
<feature type="initiator methionine" description="Removed; alternate" evidence="3">
    <location>
        <position position="1"/>
    </location>
</feature>
<feature type="chain" id="PRO_0000295287" description="Heterogeneous nuclear ribonucleoprotein A1, N-terminally processed">
    <location>
        <begin position="2"/>
        <end position="320"/>
    </location>
</feature>
<feature type="domain" description="RRM 1" evidence="6">
    <location>
        <begin position="14"/>
        <end position="97"/>
    </location>
</feature>
<feature type="domain" description="RRM 2" evidence="6">
    <location>
        <begin position="105"/>
        <end position="184"/>
    </location>
</feature>
<feature type="region of interest" description="Globular A domain">
    <location>
        <begin position="4"/>
        <end position="94"/>
    </location>
</feature>
<feature type="region of interest" description="Globular B domain">
    <location>
        <begin position="95"/>
        <end position="185"/>
    </location>
</feature>
<feature type="region of interest" description="Disordered" evidence="7">
    <location>
        <begin position="182"/>
        <end position="216"/>
    </location>
</feature>
<feature type="region of interest" description="RNA-binding RGG-box">
    <location>
        <begin position="218"/>
        <end position="240"/>
    </location>
</feature>
<feature type="region of interest" description="Nuclear targeting sequence" evidence="1">
    <location>
        <begin position="268"/>
        <end position="305"/>
    </location>
</feature>
<feature type="region of interest" description="Disordered" evidence="7">
    <location>
        <begin position="274"/>
        <end position="320"/>
    </location>
</feature>
<feature type="compositionally biased region" description="Gly residues" evidence="7">
    <location>
        <begin position="197"/>
        <end position="216"/>
    </location>
</feature>
<feature type="compositionally biased region" description="Gly residues" evidence="7">
    <location>
        <begin position="276"/>
        <end position="294"/>
    </location>
</feature>
<feature type="compositionally biased region" description="Low complexity" evidence="7">
    <location>
        <begin position="308"/>
        <end position="320"/>
    </location>
</feature>
<feature type="modified residue" description="N-acetylmethionine" evidence="3">
    <location>
        <position position="1"/>
    </location>
</feature>
<feature type="modified residue" description="N-acetylserine; in Heterogeneous nuclear ribonucleoprotein A1, N-terminally processed" evidence="3">
    <location>
        <position position="2"/>
    </location>
</feature>
<feature type="modified residue" description="Phosphoserine" evidence="3">
    <location>
        <position position="2"/>
    </location>
</feature>
<feature type="modified residue" description="N6-acetyllysine; alternate" evidence="3">
    <location>
        <position position="3"/>
    </location>
</feature>
<feature type="modified residue" description="Phosphoserine" evidence="3">
    <location>
        <position position="4"/>
    </location>
</feature>
<feature type="modified residue" description="Phosphoserine" evidence="3">
    <location>
        <position position="6"/>
    </location>
</feature>
<feature type="modified residue" description="Phosphoserine" evidence="5">
    <location>
        <position position="22"/>
    </location>
</feature>
<feature type="modified residue" description="Phosphoserine; by MKNK2" evidence="3">
    <location>
        <position position="192"/>
    </location>
</feature>
<feature type="modified residue" description="Asymmetric dimethylarginine; alternate" evidence="4">
    <location>
        <position position="194"/>
    </location>
</feature>
<feature type="modified residue" description="Dimethylated arginine; alternate" evidence="3">
    <location>
        <position position="194"/>
    </location>
</feature>
<feature type="modified residue" description="Omega-N-methylarginine; alternate" evidence="5">
    <location>
        <position position="194"/>
    </location>
</feature>
<feature type="modified residue" description="Phosphoserine" evidence="3">
    <location>
        <position position="199"/>
    </location>
</feature>
<feature type="modified residue" description="Asymmetric dimethylarginine; alternate" evidence="3">
    <location>
        <position position="206"/>
    </location>
</feature>
<feature type="modified residue" description="Dimethylated arginine; alternate" evidence="3">
    <location>
        <position position="206"/>
    </location>
</feature>
<feature type="modified residue" description="Omega-N-methylarginine; alternate" evidence="3">
    <location>
        <position position="206"/>
    </location>
</feature>
<feature type="modified residue" description="Asymmetric dimethylarginine; alternate" evidence="3">
    <location>
        <position position="218"/>
    </location>
</feature>
<feature type="modified residue" description="Omega-N-methylarginine; alternate" evidence="3">
    <location>
        <position position="218"/>
    </location>
</feature>
<feature type="modified residue" description="Asymmetric dimethylarginine; alternate" evidence="3">
    <location>
        <position position="225"/>
    </location>
</feature>
<feature type="modified residue" description="Dimethylated arginine; alternate" evidence="3">
    <location>
        <position position="225"/>
    </location>
</feature>
<feature type="modified residue" description="Omega-N-methylarginine; alternate" evidence="3">
    <location>
        <position position="225"/>
    </location>
</feature>
<feature type="modified residue" description="Asymmetric dimethylarginine; alternate" evidence="2">
    <location>
        <position position="232"/>
    </location>
</feature>
<feature type="modified residue" description="Omega-N-methylarginine; alternate" evidence="3">
    <location>
        <position position="232"/>
    </location>
</feature>
<feature type="modified residue" description="Omega-N-methylarginine" evidence="3">
    <location>
        <position position="284"/>
    </location>
</feature>
<feature type="modified residue" description="Phosphoserine" evidence="3">
    <location>
        <position position="285"/>
    </location>
</feature>
<feature type="modified residue" description="N6-acetyllysine; alternate" evidence="3">
    <location>
        <position position="298"/>
    </location>
</feature>
<feature type="modified residue" description="Omega-N-methylarginine" evidence="3">
    <location>
        <position position="300"/>
    </location>
</feature>
<feature type="modified residue" description="Phosphoserine" evidence="3">
    <location>
        <position position="309"/>
    </location>
</feature>
<feature type="modified residue" description="Phosphoserine; by MKNK2" evidence="3">
    <location>
        <position position="310"/>
    </location>
</feature>
<feature type="modified residue" description="Phosphoserine; by MKNK2" evidence="3">
    <location>
        <position position="311"/>
    </location>
</feature>
<feature type="modified residue" description="Phosphoserine; by MKNK2" evidence="3">
    <location>
        <position position="312"/>
    </location>
</feature>
<feature type="modified residue" description="Phosphoserine" evidence="3">
    <location>
        <position position="313"/>
    </location>
</feature>
<feature type="modified residue" description="Phosphoserine" evidence="3">
    <location>
        <position position="316"/>
    </location>
</feature>
<feature type="modified residue" description="Omega-N-methylarginine" evidence="3">
    <location>
        <position position="318"/>
    </location>
</feature>
<feature type="cross-link" description="Glycyl lysine isopeptide (Lys-Gly) (interchain with G-Cter in SUMO2); alternate" evidence="3">
    <location>
        <position position="3"/>
    </location>
</feature>
<feature type="cross-link" description="Glycyl lysine isopeptide (Lys-Gly) (interchain with G-Cter in SUMO2)" evidence="3">
    <location>
        <position position="8"/>
    </location>
</feature>
<feature type="cross-link" description="Glycyl lysine isopeptide (Lys-Gly) (interchain with G-Cter in SUMO2)" evidence="3">
    <location>
        <position position="78"/>
    </location>
</feature>
<feature type="cross-link" description="Glycyl lysine isopeptide (Lys-Gly) (interchain with G-Cter in SUMO)" evidence="1">
    <location>
        <position position="113"/>
    </location>
</feature>
<feature type="cross-link" description="Glycyl lysine isopeptide (Lys-Gly) (interchain with G-Cter in SUMO2)" evidence="3">
    <location>
        <position position="179"/>
    </location>
</feature>
<feature type="cross-link" description="Glycyl lysine isopeptide (Lys-Gly) (interchain with G-Cter in SUMO2)" evidence="3">
    <location>
        <position position="183"/>
    </location>
</feature>
<feature type="cross-link" description="Glycyl lysine isopeptide (Lys-Gly) (interchain with G-Cter in SUMO2); alternate" evidence="3">
    <location>
        <position position="298"/>
    </location>
</feature>
<keyword id="KW-0007">Acetylation</keyword>
<keyword id="KW-0963">Cytoplasm</keyword>
<keyword id="KW-1017">Isopeptide bond</keyword>
<keyword id="KW-0488">Methylation</keyword>
<keyword id="KW-0507">mRNA processing</keyword>
<keyword id="KW-0508">mRNA splicing</keyword>
<keyword id="KW-0509">mRNA transport</keyword>
<keyword id="KW-0539">Nucleus</keyword>
<keyword id="KW-0597">Phosphoprotein</keyword>
<keyword id="KW-1185">Reference proteome</keyword>
<keyword id="KW-0677">Repeat</keyword>
<keyword id="KW-0687">Ribonucleoprotein</keyword>
<keyword id="KW-0694">RNA-binding</keyword>
<keyword id="KW-0747">Spliceosome</keyword>
<keyword id="KW-0813">Transport</keyword>
<keyword id="KW-0832">Ubl conjugation</keyword>
<protein>
    <recommendedName>
        <fullName>Heterogeneous nuclear ribonucleoprotein A1</fullName>
        <shortName>hnRNP A1</shortName>
    </recommendedName>
    <alternativeName>
        <fullName>Helix-destabilizing protein</fullName>
    </alternativeName>
    <alternativeName>
        <fullName>Single-strand-binding protein</fullName>
    </alternativeName>
    <alternativeName>
        <fullName>hnRNP core protein A1</fullName>
    </alternativeName>
    <component>
        <recommendedName>
            <fullName>Heterogeneous nuclear ribonucleoprotein A1, N-terminally processed</fullName>
        </recommendedName>
    </component>
</protein>
<dbReference type="EMBL" id="AB222102">
    <property type="protein sequence ID" value="BAF62347.1"/>
    <property type="molecule type" value="mRNA"/>
</dbReference>
<dbReference type="EMBL" id="AL954201">
    <property type="protein sequence ID" value="CAH18571.1"/>
    <property type="molecule type" value="Genomic_DNA"/>
</dbReference>
<dbReference type="RefSeq" id="NP_001184040.1">
    <property type="nucleotide sequence ID" value="NM_001197111.1"/>
</dbReference>
<dbReference type="BMRB" id="A5A6H4"/>
<dbReference type="SMR" id="A5A6H4"/>
<dbReference type="FunCoup" id="A5A6H4">
    <property type="interactions" value="518"/>
</dbReference>
<dbReference type="STRING" id="9598.ENSPTRP00000060941"/>
<dbReference type="PaxDb" id="9598-ENSPTRP00000048316"/>
<dbReference type="Ensembl" id="ENSPTRT00000090598.1">
    <property type="protein sequence ID" value="ENSPTRP00000065492.1"/>
    <property type="gene ID" value="ENSPTRG00000049417.1"/>
</dbReference>
<dbReference type="GeneID" id="747284"/>
<dbReference type="KEGG" id="ptr:739306"/>
<dbReference type="KEGG" id="ptr:747284"/>
<dbReference type="CTD" id="3178"/>
<dbReference type="CTD" id="739306"/>
<dbReference type="eggNOG" id="KOG0118">
    <property type="taxonomic scope" value="Eukaryota"/>
</dbReference>
<dbReference type="GeneTree" id="ENSGT00950000183123"/>
<dbReference type="HOGENOM" id="CLU_012062_1_0_1"/>
<dbReference type="InParanoid" id="A5A6H4"/>
<dbReference type="OrthoDB" id="17033at9604"/>
<dbReference type="TreeFam" id="TF351342"/>
<dbReference type="Proteomes" id="UP000002277">
    <property type="component" value="Chromosome 12"/>
</dbReference>
<dbReference type="Proteomes" id="UP000243858">
    <property type="component" value="Chromosome 22"/>
</dbReference>
<dbReference type="Bgee" id="ENSPTRG00000049417">
    <property type="expression patterns" value="Expressed in fibroblast and 20 other cell types or tissues"/>
</dbReference>
<dbReference type="GO" id="GO:0071013">
    <property type="term" value="C:catalytic step 2 spliceosome"/>
    <property type="evidence" value="ECO:0000318"/>
    <property type="project" value="GO_Central"/>
</dbReference>
<dbReference type="GO" id="GO:0005737">
    <property type="term" value="C:cytoplasm"/>
    <property type="evidence" value="ECO:0007669"/>
    <property type="project" value="UniProtKB-SubCell"/>
</dbReference>
<dbReference type="GO" id="GO:0005634">
    <property type="term" value="C:nucleus"/>
    <property type="evidence" value="ECO:0000250"/>
    <property type="project" value="UniProtKB"/>
</dbReference>
<dbReference type="GO" id="GO:1990904">
    <property type="term" value="C:ribonucleoprotein complex"/>
    <property type="evidence" value="ECO:0000250"/>
    <property type="project" value="UniProtKB"/>
</dbReference>
<dbReference type="GO" id="GO:0003723">
    <property type="term" value="F:RNA binding"/>
    <property type="evidence" value="ECO:0007669"/>
    <property type="project" value="UniProtKB-KW"/>
</dbReference>
<dbReference type="GO" id="GO:1903936">
    <property type="term" value="P:cellular response to sodium arsenite"/>
    <property type="evidence" value="ECO:0000250"/>
    <property type="project" value="UniProtKB"/>
</dbReference>
<dbReference type="GO" id="GO:0000398">
    <property type="term" value="P:mRNA splicing, via spliceosome"/>
    <property type="evidence" value="ECO:0000318"/>
    <property type="project" value="GO_Central"/>
</dbReference>
<dbReference type="GO" id="GO:0051028">
    <property type="term" value="P:mRNA transport"/>
    <property type="evidence" value="ECO:0007669"/>
    <property type="project" value="UniProtKB-KW"/>
</dbReference>
<dbReference type="CDD" id="cd12761">
    <property type="entry name" value="RRM1_hnRNPA1"/>
    <property type="match status" value="1"/>
</dbReference>
<dbReference type="CDD" id="cd12582">
    <property type="entry name" value="RRM2_hnRNPA3"/>
    <property type="match status" value="1"/>
</dbReference>
<dbReference type="FunFam" id="3.30.70.330:FF:000048">
    <property type="entry name" value="Heterogeneous nuclear ribonucleoprotein a1 isoform"/>
    <property type="match status" value="1"/>
</dbReference>
<dbReference type="FunFam" id="3.30.70.330:FF:000429">
    <property type="entry name" value="Heterogeneous nuclear ribonucleoprotein A1-like 2"/>
    <property type="match status" value="1"/>
</dbReference>
<dbReference type="Gene3D" id="3.30.70.330">
    <property type="match status" value="2"/>
</dbReference>
<dbReference type="InterPro" id="IPR034516">
    <property type="entry name" value="hnRNPA1/3_RRM2"/>
</dbReference>
<dbReference type="InterPro" id="IPR021662">
    <property type="entry name" value="HnRNPA1/A2_C"/>
</dbReference>
<dbReference type="InterPro" id="IPR034845">
    <property type="entry name" value="hnRNPA1_RRM1"/>
</dbReference>
<dbReference type="InterPro" id="IPR012677">
    <property type="entry name" value="Nucleotide-bd_a/b_plait_sf"/>
</dbReference>
<dbReference type="InterPro" id="IPR035979">
    <property type="entry name" value="RBD_domain_sf"/>
</dbReference>
<dbReference type="InterPro" id="IPR000504">
    <property type="entry name" value="RRM_dom"/>
</dbReference>
<dbReference type="PANTHER" id="PTHR48026:SF2">
    <property type="entry name" value="HETEROGENEOUS NUCLEAR RIBONUCLEOPROTEIN A1-RELATED"/>
    <property type="match status" value="1"/>
</dbReference>
<dbReference type="PANTHER" id="PTHR48026">
    <property type="entry name" value="HOMOLOGOUS TO DROSOPHILA SQD (SQUID) PROTEIN"/>
    <property type="match status" value="1"/>
</dbReference>
<dbReference type="Pfam" id="PF11627">
    <property type="entry name" value="HnRNPA1_LC"/>
    <property type="match status" value="1"/>
</dbReference>
<dbReference type="Pfam" id="PF00076">
    <property type="entry name" value="RRM_1"/>
    <property type="match status" value="2"/>
</dbReference>
<dbReference type="SMART" id="SM00360">
    <property type="entry name" value="RRM"/>
    <property type="match status" value="2"/>
</dbReference>
<dbReference type="SUPFAM" id="SSF54928">
    <property type="entry name" value="RNA-binding domain, RBD"/>
    <property type="match status" value="2"/>
</dbReference>
<dbReference type="PROSITE" id="PS50102">
    <property type="entry name" value="RRM"/>
    <property type="match status" value="2"/>
</dbReference>
<reference key="1">
    <citation type="journal article" date="2007" name="Gene">
        <title>Mapping of chimpanzee full-length cDNAs onto the human genome unveils large potential divergence of the transcriptome.</title>
        <authorList>
            <person name="Sakate R."/>
            <person name="Suto Y."/>
            <person name="Imanishi T."/>
            <person name="Tanoue T."/>
            <person name="Hida M."/>
            <person name="Hayasaka I."/>
            <person name="Kusuda J."/>
            <person name="Gojobori T."/>
            <person name="Hashimoto K."/>
            <person name="Hirai M."/>
        </authorList>
    </citation>
    <scope>NUCLEOTIDE SEQUENCE [MRNA]</scope>
    <source>
        <tissue>Cerebellum</tissue>
    </source>
</reference>
<reference key="2">
    <citation type="journal article" date="2004" name="Nature">
        <title>DNA sequence and comparative analysis of chimpanzee chromosome 22.</title>
        <authorList>
            <person name="Watanabe H."/>
            <person name="Fujiyama A."/>
            <person name="Hattori M."/>
            <person name="Taylor T.D."/>
            <person name="Toyoda A."/>
            <person name="Kuroki Y."/>
            <person name="Noguchi H."/>
            <person name="BenKahla A."/>
            <person name="Lehrach H."/>
            <person name="Sudbrak R."/>
            <person name="Kube M."/>
            <person name="Taenzer S."/>
            <person name="Galgoczy P."/>
            <person name="Platzer M."/>
            <person name="Scharfe M."/>
            <person name="Nordsiek G."/>
            <person name="Bloecker H."/>
            <person name="Hellmann I."/>
            <person name="Khaitovich P."/>
            <person name="Paeaebo S."/>
            <person name="Reinhardt R."/>
            <person name="Zheng H.-J."/>
            <person name="Zhang X.-L."/>
            <person name="Zhu G.-F."/>
            <person name="Wang B.-F."/>
            <person name="Fu G."/>
            <person name="Ren S.-X."/>
            <person name="Zhao G.-P."/>
            <person name="Chen Z."/>
            <person name="Lee Y.-S."/>
            <person name="Cheong J.-E."/>
            <person name="Choi S.-H."/>
            <person name="Wu K.-M."/>
            <person name="Liu T.-T."/>
            <person name="Hsiao K.-J."/>
            <person name="Tsai S.-F."/>
            <person name="Kim C.-G."/>
            <person name="Oota S."/>
            <person name="Kitano T."/>
            <person name="Kohara Y."/>
            <person name="Saitou N."/>
            <person name="Park H.-S."/>
            <person name="Wang S.-Y."/>
            <person name="Yaspo M.-L."/>
            <person name="Sakaki Y."/>
        </authorList>
    </citation>
    <scope>NUCLEOTIDE SEQUENCE [LARGE SCALE GENOMIC DNA]</scope>
</reference>
<accession>A5A6H4</accession>
<accession>Q564E0</accession>
<sequence>MSKSESPKEPEQLRKLFIGGLSFETTDESLRSHFEQWGTLTDCVVMRDPNTKRSRGFGFVTYATVEEVDAAMNARPHKVDGRVVEPKRAVSREDSQRPGAHLTVKKIFVGGIKEDTEEHHLRDYFEQYGKIEVIEIMTDRGSGKKRGFAFVTFDDHDSVDKIVIQKYHTVNGHNCEVRKALSKQEMASASSSQRGRSGSGNFGGGRGGGFGGNDNFGRGGNFSGRGGFGGSRGGGGYGGSGDGYNGFGNDGSNFGGGGSYNDFGNYNNQSSNFGPMKGGNFGGRSSGPYGGGGQYFAKPRNQGGYGGSSSSSSYGSGRRF</sequence>
<name>ROA1_PANTR</name>
<organism>
    <name type="scientific">Pan troglodytes</name>
    <name type="common">Chimpanzee</name>
    <dbReference type="NCBI Taxonomy" id="9598"/>
    <lineage>
        <taxon>Eukaryota</taxon>
        <taxon>Metazoa</taxon>
        <taxon>Chordata</taxon>
        <taxon>Craniata</taxon>
        <taxon>Vertebrata</taxon>
        <taxon>Euteleostomi</taxon>
        <taxon>Mammalia</taxon>
        <taxon>Eutheria</taxon>
        <taxon>Euarchontoglires</taxon>
        <taxon>Primates</taxon>
        <taxon>Haplorrhini</taxon>
        <taxon>Catarrhini</taxon>
        <taxon>Hominidae</taxon>
        <taxon>Pan</taxon>
    </lineage>
</organism>
<proteinExistence type="evidence at transcript level"/>
<evidence type="ECO:0000250" key="1"/>
<evidence type="ECO:0000250" key="2">
    <source>
        <dbReference type="UniProtKB" id="P04256"/>
    </source>
</evidence>
<evidence type="ECO:0000250" key="3">
    <source>
        <dbReference type="UniProtKB" id="P09651"/>
    </source>
</evidence>
<evidence type="ECO:0000250" key="4">
    <source>
        <dbReference type="UniProtKB" id="P09867"/>
    </source>
</evidence>
<evidence type="ECO:0000250" key="5">
    <source>
        <dbReference type="UniProtKB" id="P49312"/>
    </source>
</evidence>
<evidence type="ECO:0000255" key="6">
    <source>
        <dbReference type="PROSITE-ProRule" id="PRU00176"/>
    </source>
</evidence>
<evidence type="ECO:0000256" key="7">
    <source>
        <dbReference type="SAM" id="MobiDB-lite"/>
    </source>
</evidence>
<gene>
    <name type="primary">HNRNPA1</name>
    <name type="synonym">HNRPA1</name>
</gene>
<comment type="function">
    <text evidence="3">Involved in the packaging of pre-mRNA into hnRNP particles, transport of poly(A) mRNA from the nucleus to the cytoplasm and modulation of splice site selection. Plays a role in the splicing of pyruvate kinase PKM by binding repressively to sequences flanking PKM exon 9, inhibiting exon 9 inclusion and resulting in exon 10 inclusion and production of the PKM M2 isoform. Binds to the IRES and thereby inhibits the translation of the apoptosis protease activating factor APAF1. May bind to specific miRNA hairpins.</text>
</comment>
<comment type="subunit">
    <text evidence="3">Identified in the spliceosome C complex. Identified in a IGF2BP1-dependent mRNP granule complex containing untranslated mRNAs. Interacts with SEPT6. Interacts with C9orf72. Interacts with KHDRBS1. Interacts with UBQLN2 (By similarity). Interacts with PPIA/CYPA (By similarity).</text>
</comment>
<comment type="subcellular location">
    <subcellularLocation>
        <location evidence="3">Nucleus</location>
    </subcellularLocation>
    <subcellularLocation>
        <location evidence="3">Cytoplasm</location>
    </subcellularLocation>
    <text evidence="3">Localized in cytoplasmic mRNP granules containing untranslated mRNAs. Shuttles continuously between the nucleus and the cytoplasm along with mRNA. Component of ribonucleosomes.</text>
</comment>
<comment type="PTM">
    <text evidence="1">Sumoylated.</text>
</comment>